<evidence type="ECO:0000255" key="1">
    <source>
        <dbReference type="HAMAP-Rule" id="MF_00487"/>
    </source>
</evidence>
<reference key="1">
    <citation type="journal article" date="2005" name="Science">
        <title>Genome sequence of the PCE-dechlorinating bacterium Dehalococcoides ethenogenes.</title>
        <authorList>
            <person name="Seshadri R."/>
            <person name="Adrian L."/>
            <person name="Fouts D.E."/>
            <person name="Eisen J.A."/>
            <person name="Phillippy A.M."/>
            <person name="Methe B.A."/>
            <person name="Ward N.L."/>
            <person name="Nelson W.C."/>
            <person name="DeBoy R.T."/>
            <person name="Khouri H.M."/>
            <person name="Kolonay J.F."/>
            <person name="Dodson R.J."/>
            <person name="Daugherty S.C."/>
            <person name="Brinkac L.M."/>
            <person name="Sullivan S.A."/>
            <person name="Madupu R."/>
            <person name="Nelson K.E."/>
            <person name="Kang K.H."/>
            <person name="Impraim M."/>
            <person name="Tran K."/>
            <person name="Robinson J.M."/>
            <person name="Forberger H.A."/>
            <person name="Fraser C.M."/>
            <person name="Zinder S.H."/>
            <person name="Heidelberg J.F."/>
        </authorList>
    </citation>
    <scope>NUCLEOTIDE SEQUENCE [LARGE SCALE GENOMIC DNA]</scope>
    <source>
        <strain>ATCC BAA-2266 / KCTC 15142 / 195</strain>
    </source>
</reference>
<accession>Q3Z9A4</accession>
<organism>
    <name type="scientific">Dehalococcoides mccartyi (strain ATCC BAA-2266 / KCTC 15142 / 195)</name>
    <name type="common">Dehalococcoides ethenogenes (strain 195)</name>
    <dbReference type="NCBI Taxonomy" id="243164"/>
    <lineage>
        <taxon>Bacteria</taxon>
        <taxon>Bacillati</taxon>
        <taxon>Chloroflexota</taxon>
        <taxon>Dehalococcoidia</taxon>
        <taxon>Dehalococcoidales</taxon>
        <taxon>Dehalococcoidaceae</taxon>
        <taxon>Dehalococcoides</taxon>
    </lineage>
</organism>
<dbReference type="EC" id="1.1.1.37" evidence="1"/>
<dbReference type="EMBL" id="CP000027">
    <property type="protein sequence ID" value="AAW40235.1"/>
    <property type="molecule type" value="Genomic_DNA"/>
</dbReference>
<dbReference type="RefSeq" id="WP_010936228.1">
    <property type="nucleotide sequence ID" value="NC_002936.3"/>
</dbReference>
<dbReference type="SMR" id="Q3Z9A4"/>
<dbReference type="FunCoup" id="Q3Z9A4">
    <property type="interactions" value="206"/>
</dbReference>
<dbReference type="STRING" id="243164.DET0451"/>
<dbReference type="GeneID" id="3230199"/>
<dbReference type="KEGG" id="det:DET0451"/>
<dbReference type="PATRIC" id="fig|243164.10.peg.429"/>
<dbReference type="eggNOG" id="COG0039">
    <property type="taxonomic scope" value="Bacteria"/>
</dbReference>
<dbReference type="HOGENOM" id="CLU_045401_2_1_0"/>
<dbReference type="InParanoid" id="Q3Z9A4"/>
<dbReference type="Proteomes" id="UP000008289">
    <property type="component" value="Chromosome"/>
</dbReference>
<dbReference type="GO" id="GO:0004459">
    <property type="term" value="F:L-lactate dehydrogenase activity"/>
    <property type="evidence" value="ECO:0007669"/>
    <property type="project" value="TreeGrafter"/>
</dbReference>
<dbReference type="GO" id="GO:0030060">
    <property type="term" value="F:L-malate dehydrogenase (NAD+) activity"/>
    <property type="evidence" value="ECO:0007669"/>
    <property type="project" value="UniProtKB-UniRule"/>
</dbReference>
<dbReference type="GO" id="GO:0006089">
    <property type="term" value="P:lactate metabolic process"/>
    <property type="evidence" value="ECO:0007669"/>
    <property type="project" value="TreeGrafter"/>
</dbReference>
<dbReference type="GO" id="GO:0006099">
    <property type="term" value="P:tricarboxylic acid cycle"/>
    <property type="evidence" value="ECO:0007669"/>
    <property type="project" value="UniProtKB-UniRule"/>
</dbReference>
<dbReference type="CDD" id="cd01339">
    <property type="entry name" value="LDH-like_MDH"/>
    <property type="match status" value="1"/>
</dbReference>
<dbReference type="FunFam" id="3.40.50.720:FF:000018">
    <property type="entry name" value="Malate dehydrogenase"/>
    <property type="match status" value="1"/>
</dbReference>
<dbReference type="Gene3D" id="3.90.110.10">
    <property type="entry name" value="Lactate dehydrogenase/glycoside hydrolase, family 4, C-terminal"/>
    <property type="match status" value="1"/>
</dbReference>
<dbReference type="Gene3D" id="3.40.50.720">
    <property type="entry name" value="NAD(P)-binding Rossmann-like Domain"/>
    <property type="match status" value="1"/>
</dbReference>
<dbReference type="HAMAP" id="MF_00487">
    <property type="entry name" value="Malate_dehydrog_3"/>
    <property type="match status" value="1"/>
</dbReference>
<dbReference type="InterPro" id="IPR001557">
    <property type="entry name" value="L-lactate/malate_DH"/>
</dbReference>
<dbReference type="InterPro" id="IPR022383">
    <property type="entry name" value="Lactate/malate_DH_C"/>
</dbReference>
<dbReference type="InterPro" id="IPR001236">
    <property type="entry name" value="Lactate/malate_DH_N"/>
</dbReference>
<dbReference type="InterPro" id="IPR015955">
    <property type="entry name" value="Lactate_DH/Glyco_Ohase_4_C"/>
</dbReference>
<dbReference type="InterPro" id="IPR011275">
    <property type="entry name" value="Malate_DH_type3"/>
</dbReference>
<dbReference type="InterPro" id="IPR036291">
    <property type="entry name" value="NAD(P)-bd_dom_sf"/>
</dbReference>
<dbReference type="NCBIfam" id="TIGR01763">
    <property type="entry name" value="MalateDH_bact"/>
    <property type="match status" value="1"/>
</dbReference>
<dbReference type="NCBIfam" id="NF004863">
    <property type="entry name" value="PRK06223.1"/>
    <property type="match status" value="1"/>
</dbReference>
<dbReference type="PANTHER" id="PTHR43128">
    <property type="entry name" value="L-2-HYDROXYCARBOXYLATE DEHYDROGENASE (NAD(P)(+))"/>
    <property type="match status" value="1"/>
</dbReference>
<dbReference type="PANTHER" id="PTHR43128:SF16">
    <property type="entry name" value="L-LACTATE DEHYDROGENASE"/>
    <property type="match status" value="1"/>
</dbReference>
<dbReference type="Pfam" id="PF02866">
    <property type="entry name" value="Ldh_1_C"/>
    <property type="match status" value="1"/>
</dbReference>
<dbReference type="Pfam" id="PF00056">
    <property type="entry name" value="Ldh_1_N"/>
    <property type="match status" value="1"/>
</dbReference>
<dbReference type="PIRSF" id="PIRSF000102">
    <property type="entry name" value="Lac_mal_DH"/>
    <property type="match status" value="1"/>
</dbReference>
<dbReference type="PRINTS" id="PR00086">
    <property type="entry name" value="LLDHDRGNASE"/>
</dbReference>
<dbReference type="SUPFAM" id="SSF56327">
    <property type="entry name" value="LDH C-terminal domain-like"/>
    <property type="match status" value="1"/>
</dbReference>
<dbReference type="SUPFAM" id="SSF51735">
    <property type="entry name" value="NAD(P)-binding Rossmann-fold domains"/>
    <property type="match status" value="1"/>
</dbReference>
<protein>
    <recommendedName>
        <fullName evidence="1">Malate dehydrogenase</fullName>
        <ecNumber evidence="1">1.1.1.37</ecNumber>
    </recommendedName>
</protein>
<name>MDH_DEHM1</name>
<gene>
    <name evidence="1" type="primary">mdh</name>
    <name type="ordered locus">DET0451</name>
</gene>
<proteinExistence type="inferred from homology"/>
<keyword id="KW-0520">NAD</keyword>
<keyword id="KW-0560">Oxidoreductase</keyword>
<keyword id="KW-0816">Tricarboxylic acid cycle</keyword>
<feature type="chain" id="PRO_0000241945" description="Malate dehydrogenase">
    <location>
        <begin position="1"/>
        <end position="307"/>
    </location>
</feature>
<feature type="active site" description="Proton acceptor" evidence="1">
    <location>
        <position position="174"/>
    </location>
</feature>
<feature type="binding site" evidence="1">
    <location>
        <begin position="8"/>
        <end position="13"/>
    </location>
    <ligand>
        <name>NAD(+)</name>
        <dbReference type="ChEBI" id="CHEBI:57540"/>
    </ligand>
</feature>
<feature type="binding site" evidence="1">
    <location>
        <position position="32"/>
    </location>
    <ligand>
        <name>NAD(+)</name>
        <dbReference type="ChEBI" id="CHEBI:57540"/>
    </ligand>
</feature>
<feature type="binding site" evidence="1">
    <location>
        <position position="81"/>
    </location>
    <ligand>
        <name>substrate</name>
    </ligand>
</feature>
<feature type="binding site" evidence="1">
    <location>
        <position position="87"/>
    </location>
    <ligand>
        <name>substrate</name>
    </ligand>
</feature>
<feature type="binding site" evidence="1">
    <location>
        <position position="94"/>
    </location>
    <ligand>
        <name>NAD(+)</name>
        <dbReference type="ChEBI" id="CHEBI:57540"/>
    </ligand>
</feature>
<feature type="binding site" evidence="1">
    <location>
        <begin position="117"/>
        <end position="119"/>
    </location>
    <ligand>
        <name>NAD(+)</name>
        <dbReference type="ChEBI" id="CHEBI:57540"/>
    </ligand>
</feature>
<feature type="binding site" evidence="1">
    <location>
        <position position="119"/>
    </location>
    <ligand>
        <name>substrate</name>
    </ligand>
</feature>
<feature type="binding site" evidence="1">
    <location>
        <position position="150"/>
    </location>
    <ligand>
        <name>substrate</name>
    </ligand>
</feature>
<sequence length="307" mass="31781">MPKISVIGAGNVGATLAQRLIEKDFADVVMLDVVEGIPQGKALDISQSANVLGFSHTITGSNDYAETAGSEIVVITAGIARKPGMTREELLAINQKIMTDVVSNCLKYSPEATLVVVSNPVDTMTYLAWKLSGLPRKRVVGLSGVLDGGRLATFVARELGVKPSAVTPCVMGEHGGSMVVMPRFTLVSGKPLSELVSAEKADELAKRAVNGGAEIVAFLKTGSAFYAPSASIAAMAEAIFTGSGKVMNCAAVLDGEYGLKNIVLGVPVKLGKGGLQEIITLPLDGTENARLLASAEVVKGQIAALSL</sequence>
<comment type="function">
    <text evidence="1">Catalyzes the reversible oxidation of malate to oxaloacetate.</text>
</comment>
<comment type="catalytic activity">
    <reaction evidence="1">
        <text>(S)-malate + NAD(+) = oxaloacetate + NADH + H(+)</text>
        <dbReference type="Rhea" id="RHEA:21432"/>
        <dbReference type="ChEBI" id="CHEBI:15378"/>
        <dbReference type="ChEBI" id="CHEBI:15589"/>
        <dbReference type="ChEBI" id="CHEBI:16452"/>
        <dbReference type="ChEBI" id="CHEBI:57540"/>
        <dbReference type="ChEBI" id="CHEBI:57945"/>
        <dbReference type="EC" id="1.1.1.37"/>
    </reaction>
</comment>
<comment type="similarity">
    <text evidence="1">Belongs to the LDH/MDH superfamily. MDH type 3 family.</text>
</comment>